<name>Y2870_CLOBJ</name>
<comment type="similarity">
    <text evidence="1">Belongs to the UPF0297 family.</text>
</comment>
<proteinExistence type="inferred from homology"/>
<dbReference type="EMBL" id="CP001581">
    <property type="protein sequence ID" value="ACO86683.1"/>
    <property type="molecule type" value="Genomic_DNA"/>
</dbReference>
<dbReference type="RefSeq" id="WP_003385813.1">
    <property type="nucleotide sequence ID" value="NC_012563.1"/>
</dbReference>
<dbReference type="SMR" id="C1FTB9"/>
<dbReference type="KEGG" id="cby:CLM_2870"/>
<dbReference type="eggNOG" id="COG4472">
    <property type="taxonomic scope" value="Bacteria"/>
</dbReference>
<dbReference type="HOGENOM" id="CLU_162466_0_0_9"/>
<dbReference type="Proteomes" id="UP000001374">
    <property type="component" value="Chromosome"/>
</dbReference>
<dbReference type="HAMAP" id="MF_01507">
    <property type="entry name" value="UPF0297"/>
    <property type="match status" value="1"/>
</dbReference>
<dbReference type="InterPro" id="IPR009309">
    <property type="entry name" value="IreB"/>
</dbReference>
<dbReference type="NCBIfam" id="NF003997">
    <property type="entry name" value="PRK05473.1"/>
    <property type="match status" value="1"/>
</dbReference>
<dbReference type="PANTHER" id="PTHR40067">
    <property type="entry name" value="UPF0297 PROTEIN YRZL"/>
    <property type="match status" value="1"/>
</dbReference>
<dbReference type="PANTHER" id="PTHR40067:SF1">
    <property type="entry name" value="UPF0297 PROTEIN YRZL"/>
    <property type="match status" value="1"/>
</dbReference>
<dbReference type="Pfam" id="PF06135">
    <property type="entry name" value="IreB"/>
    <property type="match status" value="1"/>
</dbReference>
<dbReference type="PIRSF" id="PIRSF037258">
    <property type="entry name" value="DUF965_bac"/>
    <property type="match status" value="1"/>
</dbReference>
<gene>
    <name type="ordered locus">CLM_2870</name>
</gene>
<sequence>MSGDKTIQFDPVENKKTLTKEILTKVYNSLLEKGYNPVNQLVGYLISGDPTYITNYNGARSLVIKLERDEILEEVIKSYLGIN</sequence>
<accession>C1FTB9</accession>
<organism>
    <name type="scientific">Clostridium botulinum (strain Kyoto / Type A2)</name>
    <dbReference type="NCBI Taxonomy" id="536232"/>
    <lineage>
        <taxon>Bacteria</taxon>
        <taxon>Bacillati</taxon>
        <taxon>Bacillota</taxon>
        <taxon>Clostridia</taxon>
        <taxon>Eubacteriales</taxon>
        <taxon>Clostridiaceae</taxon>
        <taxon>Clostridium</taxon>
    </lineage>
</organism>
<protein>
    <recommendedName>
        <fullName evidence="1">UPF0297 protein CLM_2870</fullName>
    </recommendedName>
</protein>
<feature type="chain" id="PRO_1000185039" description="UPF0297 protein CLM_2870">
    <location>
        <begin position="1"/>
        <end position="83"/>
    </location>
</feature>
<reference key="1">
    <citation type="submission" date="2008-10" db="EMBL/GenBank/DDBJ databases">
        <title>Genome sequence of Clostridium botulinum A2 Kyoto.</title>
        <authorList>
            <person name="Shrivastava S."/>
            <person name="Brinkac L.M."/>
            <person name="Brown J.L."/>
            <person name="Bruce D."/>
            <person name="Detter C.C."/>
            <person name="Johnson E.A."/>
            <person name="Munk C.A."/>
            <person name="Smith L.A."/>
            <person name="Smith T.J."/>
            <person name="Sutton G."/>
            <person name="Brettin T.S."/>
        </authorList>
    </citation>
    <scope>NUCLEOTIDE SEQUENCE [LARGE SCALE GENOMIC DNA]</scope>
    <source>
        <strain>Kyoto / Type A2</strain>
    </source>
</reference>
<evidence type="ECO:0000255" key="1">
    <source>
        <dbReference type="HAMAP-Rule" id="MF_01507"/>
    </source>
</evidence>